<sequence length="908" mass="100028">MATIHVDGKEYEVNGADNLLQACLSLGLDIPYFCWHPALGSVGACRQCAVKQYQNAEDTRGRLVMSCMTPATDGTFISIDDEEAKQFRESVVEWLMTNHPHDCPVCEEGGNCHLQDMTVMTGHSFRRYRFTKRTHRNQDLGPFISHEMNRCIACYRCVRYYKDYADGTDLGVYGAHDNVYFGRPEDGTLESEFSGNLVEICPTGVFTDKTHSERYNRKWDMQFAPSICQQCSIGCNISPGERYGELRRIENRYNGTVNHYFLCDRGRFGYGYVNLKDRPRQPVQRRGDDFITLNAEQAMQGAADILRQSKKVIGIGSPRASIESNFALRELVGAENFYTGIARGEQERLQLALKVLREGGIYTPALREIESYDAVLVLGEDVTQTGARVALAVRQAVKGKAREMAAAQKVADWQIAAILNIGQRAKHPLFVTNVDDTRLDDIAAWTYRAPVEDQARLGFAIAHALDNTAPAVDGIDSDLQNKIDVIVQALAGAKKPLIISGTNAGSSEVIQAAANVAKALKGRGADVGITMIARSVNSMGLGMMGGGSLDDALGELETGSADAVVVLENDLHRHASATRVNAALAKAPLVMVVDHQRTAIMENAHLVLSAASFAESDGTVINNEGRAQRFFQVYDPAYYDNKTIMLESWRWLHSLHSTVENREVDWTQLDHVIDAVIAAMPQFAGIKDAAPDATFRIRGQKLAREPHRYSGRTAMRANISVHEPRQPQDKDTMFAFSMEGNNQPTAPRSEIPFAWAPGWNSPQAWNKFQDEVGGKLRHGDPGVRLIEATEGGLDYFTTVPASFQAQDGQWRIAPYYHLFGSDELSQRSPVFQSRMPQPYIKLNPADAAKLGVNAGTRVSFSYDGNTVTLPVEISEGLAAGQVGLPMGMPGIAPVLAGARLEDLREAQQ</sequence>
<name>NUOG_SALTY</name>
<comment type="function">
    <text evidence="1">NDH-1 shuttles electrons from NADH, via FMN and iron-sulfur (Fe-S) centers, to quinones in the respiratory chain. The immediate electron acceptor for the enzyme in this species is believed to be ubiquinone. Couples the redox reaction to proton translocation (for every two electrons transferred, four hydrogen ions are translocated across the cytoplasmic membrane), and thus conserves the redox energy in a proton gradient (By similarity).</text>
</comment>
<comment type="catalytic activity">
    <reaction>
        <text>a quinone + NADH + 5 H(+)(in) = a quinol + NAD(+) + 4 H(+)(out)</text>
        <dbReference type="Rhea" id="RHEA:57888"/>
        <dbReference type="ChEBI" id="CHEBI:15378"/>
        <dbReference type="ChEBI" id="CHEBI:24646"/>
        <dbReference type="ChEBI" id="CHEBI:57540"/>
        <dbReference type="ChEBI" id="CHEBI:57945"/>
        <dbReference type="ChEBI" id="CHEBI:132124"/>
    </reaction>
</comment>
<comment type="cofactor">
    <cofactor evidence="1">
        <name>[2Fe-2S] cluster</name>
        <dbReference type="ChEBI" id="CHEBI:190135"/>
    </cofactor>
    <text evidence="1">Binds 1 [2Fe-2S] cluster per subunit.</text>
</comment>
<comment type="cofactor">
    <cofactor evidence="1">
        <name>[4Fe-4S] cluster</name>
        <dbReference type="ChEBI" id="CHEBI:49883"/>
    </cofactor>
    <text evidence="1">Binds 3 [4Fe-4S] clusters per subunit.</text>
</comment>
<comment type="subunit">
    <text>Composed of 13 different subunits. Subunits NuoCD, E, F, and G constitute the peripheral sector of the complex.</text>
</comment>
<comment type="similarity">
    <text evidence="5">Belongs to the complex I 75 kDa subunit family.</text>
</comment>
<comment type="sequence caution" evidence="5">
    <conflict type="erroneous initiation">
        <sequence resource="EMBL-CDS" id="AAA16063"/>
    </conflict>
</comment>
<comment type="sequence caution" evidence="5">
    <conflict type="erroneous initiation">
        <sequence resource="EMBL-CDS" id="AAL21224"/>
    </conflict>
</comment>
<comment type="sequence caution" evidence="5">
    <conflict type="frameshift">
        <sequence resource="EMBL" id="L42521"/>
    </conflict>
</comment>
<evidence type="ECO:0000250" key="1"/>
<evidence type="ECO:0000255" key="2">
    <source>
        <dbReference type="PROSITE-ProRule" id="PRU00465"/>
    </source>
</evidence>
<evidence type="ECO:0000255" key="3">
    <source>
        <dbReference type="PROSITE-ProRule" id="PRU01004"/>
    </source>
</evidence>
<evidence type="ECO:0000255" key="4">
    <source>
        <dbReference type="PROSITE-ProRule" id="PRU01184"/>
    </source>
</evidence>
<evidence type="ECO:0000305" key="5"/>
<gene>
    <name type="primary">nuoG</name>
    <name type="ordered locus">STM2323</name>
</gene>
<reference key="1">
    <citation type="journal article" date="2001" name="Nature">
        <title>Complete genome sequence of Salmonella enterica serovar Typhimurium LT2.</title>
        <authorList>
            <person name="McClelland M."/>
            <person name="Sanderson K.E."/>
            <person name="Spieth J."/>
            <person name="Clifton S.W."/>
            <person name="Latreille P."/>
            <person name="Courtney L."/>
            <person name="Porwollik S."/>
            <person name="Ali J."/>
            <person name="Dante M."/>
            <person name="Du F."/>
            <person name="Hou S."/>
            <person name="Layman D."/>
            <person name="Leonard S."/>
            <person name="Nguyen C."/>
            <person name="Scott K."/>
            <person name="Holmes A."/>
            <person name="Grewal N."/>
            <person name="Mulvaney E."/>
            <person name="Ryan E."/>
            <person name="Sun H."/>
            <person name="Florea L."/>
            <person name="Miller W."/>
            <person name="Stoneking T."/>
            <person name="Nhan M."/>
            <person name="Waterston R."/>
            <person name="Wilson R.K."/>
        </authorList>
    </citation>
    <scope>NUCLEOTIDE SEQUENCE [LARGE SCALE GENOMIC DNA]</scope>
    <source>
        <strain>LT2 / SGSC1412 / ATCC 700720</strain>
    </source>
</reference>
<reference key="2">
    <citation type="journal article" date="1993" name="Proc. Natl. Acad. Sci. U.S.A.">
        <title>Mutants defective in the energy-conserving NADH dehydrogenase of Salmonella typhimurium identified by a decrease in energy-dependent proteolysis after carbon starvation.</title>
        <authorList>
            <person name="Archer C.D."/>
            <person name="Wang X."/>
            <person name="Elliott T."/>
        </authorList>
    </citation>
    <scope>NUCLEOTIDE SEQUENCE [GENOMIC DNA] OF 1-612</scope>
</reference>
<reference key="3">
    <citation type="journal article" date="1997" name="J. Bacteriol.">
        <title>Influence of genes encoding proton-translocating enzymes on suppression of Salmonella typhimurium growth and colonization.</title>
        <authorList>
            <person name="Zhang-Barber L.Z."/>
            <person name="Turner A.K."/>
            <person name="Martin G."/>
            <person name="Fraenkel G."/>
            <person name="Dougan G."/>
            <person name="Barrow P.A."/>
        </authorList>
    </citation>
    <scope>NUCLEOTIDE SEQUENCE [GENOMIC DNA] OF 612-908</scope>
    <source>
        <strain>F98</strain>
    </source>
</reference>
<feature type="initiator methionine" description="Removed" evidence="1">
    <location>
        <position position="1"/>
    </location>
</feature>
<feature type="chain" id="PRO_0000118554" description="NADH-quinone oxidoreductase subunit G">
    <location>
        <begin position="2"/>
        <end position="908"/>
    </location>
</feature>
<feature type="domain" description="2Fe-2S ferredoxin-type" evidence="2">
    <location>
        <begin position="2"/>
        <end position="83"/>
    </location>
</feature>
<feature type="domain" description="4Fe-4S His(Cys)3-ligated-type" evidence="4">
    <location>
        <begin position="83"/>
        <end position="122"/>
    </location>
</feature>
<feature type="domain" description="4Fe-4S Mo/W bis-MGD-type" evidence="3">
    <location>
        <begin position="221"/>
        <end position="277"/>
    </location>
</feature>
<feature type="binding site" evidence="1">
    <location>
        <position position="34"/>
    </location>
    <ligand>
        <name>[2Fe-2S] cluster</name>
        <dbReference type="ChEBI" id="CHEBI:190135"/>
    </ligand>
</feature>
<feature type="binding site" evidence="1">
    <location>
        <position position="45"/>
    </location>
    <ligand>
        <name>[2Fe-2S] cluster</name>
        <dbReference type="ChEBI" id="CHEBI:190135"/>
    </ligand>
</feature>
<feature type="binding site" evidence="1">
    <location>
        <position position="48"/>
    </location>
    <ligand>
        <name>[2Fe-2S] cluster</name>
        <dbReference type="ChEBI" id="CHEBI:190135"/>
    </ligand>
</feature>
<feature type="binding site" evidence="1">
    <location>
        <position position="67"/>
    </location>
    <ligand>
        <name>[2Fe-2S] cluster</name>
        <dbReference type="ChEBI" id="CHEBI:190135"/>
    </ligand>
</feature>
<feature type="binding site" evidence="4">
    <location>
        <position position="99"/>
    </location>
    <ligand>
        <name>[4Fe-4S] cluster</name>
        <dbReference type="ChEBI" id="CHEBI:49883"/>
        <label>1</label>
    </ligand>
</feature>
<feature type="binding site" evidence="4">
    <location>
        <position position="103"/>
    </location>
    <ligand>
        <name>[4Fe-4S] cluster</name>
        <dbReference type="ChEBI" id="CHEBI:49883"/>
        <label>1</label>
    </ligand>
</feature>
<feature type="binding site" evidence="4">
    <location>
        <position position="106"/>
    </location>
    <ligand>
        <name>[4Fe-4S] cluster</name>
        <dbReference type="ChEBI" id="CHEBI:49883"/>
        <label>1</label>
    </ligand>
</feature>
<feature type="binding site" evidence="4">
    <location>
        <position position="112"/>
    </location>
    <ligand>
        <name>[4Fe-4S] cluster</name>
        <dbReference type="ChEBI" id="CHEBI:49883"/>
        <label>1</label>
    </ligand>
</feature>
<feature type="binding site" evidence="1">
    <location>
        <position position="151"/>
    </location>
    <ligand>
        <name>[4Fe-4S] cluster</name>
        <dbReference type="ChEBI" id="CHEBI:49883"/>
        <label>2</label>
    </ligand>
</feature>
<feature type="binding site" evidence="1">
    <location>
        <position position="154"/>
    </location>
    <ligand>
        <name>[4Fe-4S] cluster</name>
        <dbReference type="ChEBI" id="CHEBI:49883"/>
        <label>2</label>
    </ligand>
</feature>
<feature type="binding site" evidence="1">
    <location>
        <position position="157"/>
    </location>
    <ligand>
        <name>[4Fe-4S] cluster</name>
        <dbReference type="ChEBI" id="CHEBI:49883"/>
        <label>2</label>
    </ligand>
</feature>
<feature type="binding site" evidence="1">
    <location>
        <position position="201"/>
    </location>
    <ligand>
        <name>[4Fe-4S] cluster</name>
        <dbReference type="ChEBI" id="CHEBI:49883"/>
        <label>2</label>
    </ligand>
</feature>
<feature type="binding site" evidence="1">
    <location>
        <position position="228"/>
    </location>
    <ligand>
        <name>[4Fe-4S] cluster</name>
        <dbReference type="ChEBI" id="CHEBI:49883"/>
        <label>3</label>
    </ligand>
</feature>
<feature type="binding site" evidence="1">
    <location>
        <position position="231"/>
    </location>
    <ligand>
        <name>[4Fe-4S] cluster</name>
        <dbReference type="ChEBI" id="CHEBI:49883"/>
        <label>3</label>
    </ligand>
</feature>
<feature type="binding site" evidence="1">
    <location>
        <position position="235"/>
    </location>
    <ligand>
        <name>[4Fe-4S] cluster</name>
        <dbReference type="ChEBI" id="CHEBI:49883"/>
        <label>3</label>
    </ligand>
</feature>
<feature type="binding site" evidence="1">
    <location>
        <position position="263"/>
    </location>
    <ligand>
        <name>[4Fe-4S] cluster</name>
        <dbReference type="ChEBI" id="CHEBI:49883"/>
        <label>3</label>
    </ligand>
</feature>
<feature type="sequence conflict" description="In Ref. 3." evidence="5" ref="3">
    <original>A</original>
    <variation>V</variation>
    <location>
        <position position="678"/>
    </location>
</feature>
<feature type="sequence conflict" description="In Ref. 3." evidence="5" ref="3">
    <original>I</original>
    <variation>L</variation>
    <location>
        <position position="786"/>
    </location>
</feature>
<feature type="sequence conflict" description="In Ref. 3." evidence="5" ref="3">
    <original>A</original>
    <variation>T</variation>
    <location>
        <position position="847"/>
    </location>
</feature>
<feature type="sequence conflict" description="In Ref. 3." evidence="5" ref="3">
    <original>A</original>
    <variation>T</variation>
    <location>
        <position position="854"/>
    </location>
</feature>
<feature type="sequence conflict" description="In Ref. 3." evidence="5" ref="3">
    <original>M</original>
    <variation>I</variation>
    <location>
        <position position="888"/>
    </location>
</feature>
<proteinExistence type="inferred from homology"/>
<keyword id="KW-0001">2Fe-2S</keyword>
<keyword id="KW-0004">4Fe-4S</keyword>
<keyword id="KW-0408">Iron</keyword>
<keyword id="KW-0411">Iron-sulfur</keyword>
<keyword id="KW-0479">Metal-binding</keyword>
<keyword id="KW-0520">NAD</keyword>
<keyword id="KW-0874">Quinone</keyword>
<keyword id="KW-1185">Reference proteome</keyword>
<keyword id="KW-1278">Translocase</keyword>
<keyword id="KW-0830">Ubiquinone</keyword>
<protein>
    <recommendedName>
        <fullName>NADH-quinone oxidoreductase subunit G</fullName>
        <ecNumber>7.1.1.-</ecNumber>
    </recommendedName>
    <alternativeName>
        <fullName>NADH dehydrogenase I subunit G</fullName>
    </alternativeName>
    <alternativeName>
        <fullName>NDH-1 subunit G</fullName>
    </alternativeName>
</protein>
<dbReference type="EC" id="7.1.1.-"/>
<dbReference type="EMBL" id="AE006468">
    <property type="protein sequence ID" value="AAL21224.1"/>
    <property type="status" value="ALT_INIT"/>
    <property type="molecule type" value="Genomic_DNA"/>
</dbReference>
<dbReference type="EMBL" id="L22504">
    <property type="protein sequence ID" value="AAA16063.1"/>
    <property type="status" value="ALT_INIT"/>
    <property type="molecule type" value="Unassigned_DNA"/>
</dbReference>
<dbReference type="EMBL" id="L42521">
    <property type="status" value="NOT_ANNOTATED_CDS"/>
    <property type="molecule type" value="Genomic_DNA"/>
</dbReference>
<dbReference type="RefSeq" id="NP_461265.3">
    <property type="nucleotide sequence ID" value="NC_003197.2"/>
</dbReference>
<dbReference type="SMR" id="P0A1Y4"/>
<dbReference type="STRING" id="99287.STM2323"/>
<dbReference type="PaxDb" id="99287-STM2323"/>
<dbReference type="GeneID" id="1253845"/>
<dbReference type="KEGG" id="stm:STM2323"/>
<dbReference type="PATRIC" id="fig|99287.12.peg.2460"/>
<dbReference type="HOGENOM" id="CLU_000422_11_4_6"/>
<dbReference type="OMA" id="GRIVMSC"/>
<dbReference type="PhylomeDB" id="P0A1Y4"/>
<dbReference type="BioCyc" id="SENT99287:STM2323-MONOMER"/>
<dbReference type="Proteomes" id="UP000001014">
    <property type="component" value="Chromosome"/>
</dbReference>
<dbReference type="GO" id="GO:0016020">
    <property type="term" value="C:membrane"/>
    <property type="evidence" value="ECO:0000318"/>
    <property type="project" value="GO_Central"/>
</dbReference>
<dbReference type="GO" id="GO:1990204">
    <property type="term" value="C:oxidoreductase complex"/>
    <property type="evidence" value="ECO:0007669"/>
    <property type="project" value="UniProtKB-ARBA"/>
</dbReference>
<dbReference type="GO" id="GO:0051537">
    <property type="term" value="F:2 iron, 2 sulfur cluster binding"/>
    <property type="evidence" value="ECO:0007669"/>
    <property type="project" value="UniProtKB-KW"/>
</dbReference>
<dbReference type="GO" id="GO:0051539">
    <property type="term" value="F:4 iron, 4 sulfur cluster binding"/>
    <property type="evidence" value="ECO:0007669"/>
    <property type="project" value="UniProtKB-KW"/>
</dbReference>
<dbReference type="GO" id="GO:0046872">
    <property type="term" value="F:metal ion binding"/>
    <property type="evidence" value="ECO:0007669"/>
    <property type="project" value="UniProtKB-KW"/>
</dbReference>
<dbReference type="GO" id="GO:0043546">
    <property type="term" value="F:molybdopterin cofactor binding"/>
    <property type="evidence" value="ECO:0007669"/>
    <property type="project" value="InterPro"/>
</dbReference>
<dbReference type="GO" id="GO:0008137">
    <property type="term" value="F:NADH dehydrogenase (ubiquinone) activity"/>
    <property type="evidence" value="ECO:0007669"/>
    <property type="project" value="InterPro"/>
</dbReference>
<dbReference type="GO" id="GO:0048038">
    <property type="term" value="F:quinone binding"/>
    <property type="evidence" value="ECO:0007669"/>
    <property type="project" value="UniProtKB-KW"/>
</dbReference>
<dbReference type="GO" id="GO:0042773">
    <property type="term" value="P:ATP synthesis coupled electron transport"/>
    <property type="evidence" value="ECO:0007669"/>
    <property type="project" value="InterPro"/>
</dbReference>
<dbReference type="GO" id="GO:0022904">
    <property type="term" value="P:respiratory electron transport chain"/>
    <property type="evidence" value="ECO:0000318"/>
    <property type="project" value="GO_Central"/>
</dbReference>
<dbReference type="CDD" id="cd00207">
    <property type="entry name" value="fer2"/>
    <property type="match status" value="1"/>
</dbReference>
<dbReference type="CDD" id="cd02788">
    <property type="entry name" value="MopB_CT_NDH-1_NuoG2-N7"/>
    <property type="match status" value="1"/>
</dbReference>
<dbReference type="CDD" id="cd02771">
    <property type="entry name" value="MopB_NDH-1_NuoG2-N7"/>
    <property type="match status" value="1"/>
</dbReference>
<dbReference type="FunFam" id="2.20.25.90:FF:000003">
    <property type="entry name" value="NADH-quinone oxidoreductase"/>
    <property type="match status" value="1"/>
</dbReference>
<dbReference type="FunFam" id="2.40.40.20:FF:000014">
    <property type="entry name" value="NADH-quinone oxidoreductase"/>
    <property type="match status" value="1"/>
</dbReference>
<dbReference type="FunFam" id="3.10.20.740:FF:000002">
    <property type="entry name" value="NADH-quinone oxidoreductase"/>
    <property type="match status" value="1"/>
</dbReference>
<dbReference type="FunFam" id="3.30.200.210:FF:000004">
    <property type="entry name" value="NADH-quinone oxidoreductase"/>
    <property type="match status" value="1"/>
</dbReference>
<dbReference type="FunFam" id="3.40.50.740:FF:000006">
    <property type="entry name" value="NADH-quinone oxidoreductase"/>
    <property type="match status" value="1"/>
</dbReference>
<dbReference type="Gene3D" id="2.40.40.20">
    <property type="match status" value="1"/>
</dbReference>
<dbReference type="Gene3D" id="3.10.20.740">
    <property type="match status" value="1"/>
</dbReference>
<dbReference type="Gene3D" id="3.30.200.210">
    <property type="match status" value="1"/>
</dbReference>
<dbReference type="Gene3D" id="3.40.50.740">
    <property type="match status" value="1"/>
</dbReference>
<dbReference type="InterPro" id="IPR036010">
    <property type="entry name" value="2Fe-2S_ferredoxin-like_sf"/>
</dbReference>
<dbReference type="InterPro" id="IPR001041">
    <property type="entry name" value="2Fe-2S_ferredoxin-type"/>
</dbReference>
<dbReference type="InterPro" id="IPR009010">
    <property type="entry name" value="Asp_de-COase-like_dom_sf"/>
</dbReference>
<dbReference type="InterPro" id="IPR006657">
    <property type="entry name" value="MoPterin_dinucl-bd_dom"/>
</dbReference>
<dbReference type="InterPro" id="IPR006656">
    <property type="entry name" value="Mopterin_OxRdtase"/>
</dbReference>
<dbReference type="InterPro" id="IPR006963">
    <property type="entry name" value="Mopterin_OxRdtase_4Fe-4S_dom"/>
</dbReference>
<dbReference type="InterPro" id="IPR000283">
    <property type="entry name" value="NADH_UbQ_OxRdtase_75kDa_su_CS"/>
</dbReference>
<dbReference type="InterPro" id="IPR054351">
    <property type="entry name" value="NADH_UbQ_OxRdtase_ferredoxin"/>
</dbReference>
<dbReference type="InterPro" id="IPR010228">
    <property type="entry name" value="NADH_UbQ_OxRdtase_Gsu"/>
</dbReference>
<dbReference type="InterPro" id="IPR019574">
    <property type="entry name" value="NADH_UbQ_OxRdtase_Gsu_4Fe4S-bd"/>
</dbReference>
<dbReference type="InterPro" id="IPR050123">
    <property type="entry name" value="Prok_molybdopt-oxidoreductase"/>
</dbReference>
<dbReference type="NCBIfam" id="TIGR01973">
    <property type="entry name" value="NuoG"/>
    <property type="match status" value="1"/>
</dbReference>
<dbReference type="PANTHER" id="PTHR43105:SF10">
    <property type="entry name" value="NADH-QUINONE OXIDOREDUCTASE SUBUNIT G"/>
    <property type="match status" value="1"/>
</dbReference>
<dbReference type="PANTHER" id="PTHR43105">
    <property type="entry name" value="RESPIRATORY NITRATE REDUCTASE"/>
    <property type="match status" value="1"/>
</dbReference>
<dbReference type="Pfam" id="PF13510">
    <property type="entry name" value="Fer2_4"/>
    <property type="match status" value="1"/>
</dbReference>
<dbReference type="Pfam" id="PF22117">
    <property type="entry name" value="Fer4_Nqo3"/>
    <property type="match status" value="1"/>
</dbReference>
<dbReference type="Pfam" id="PF04879">
    <property type="entry name" value="Molybdop_Fe4S4"/>
    <property type="match status" value="1"/>
</dbReference>
<dbReference type="Pfam" id="PF00384">
    <property type="entry name" value="Molybdopterin"/>
    <property type="match status" value="1"/>
</dbReference>
<dbReference type="Pfam" id="PF01568">
    <property type="entry name" value="Molydop_binding"/>
    <property type="match status" value="1"/>
</dbReference>
<dbReference type="Pfam" id="PF10588">
    <property type="entry name" value="NADH-G_4Fe-4S_3"/>
    <property type="match status" value="1"/>
</dbReference>
<dbReference type="SMART" id="SM00926">
    <property type="entry name" value="Molybdop_Fe4S4"/>
    <property type="match status" value="1"/>
</dbReference>
<dbReference type="SMART" id="SM00929">
    <property type="entry name" value="NADH-G_4Fe-4S_3"/>
    <property type="match status" value="1"/>
</dbReference>
<dbReference type="SUPFAM" id="SSF54292">
    <property type="entry name" value="2Fe-2S ferredoxin-like"/>
    <property type="match status" value="1"/>
</dbReference>
<dbReference type="SUPFAM" id="SSF54862">
    <property type="entry name" value="4Fe-4S ferredoxins"/>
    <property type="match status" value="1"/>
</dbReference>
<dbReference type="SUPFAM" id="SSF50692">
    <property type="entry name" value="ADC-like"/>
    <property type="match status" value="1"/>
</dbReference>
<dbReference type="SUPFAM" id="SSF53706">
    <property type="entry name" value="Formate dehydrogenase/DMSO reductase, domains 1-3"/>
    <property type="match status" value="1"/>
</dbReference>
<dbReference type="PROSITE" id="PS51085">
    <property type="entry name" value="2FE2S_FER_2"/>
    <property type="match status" value="1"/>
</dbReference>
<dbReference type="PROSITE" id="PS51839">
    <property type="entry name" value="4FE4S_HC3"/>
    <property type="match status" value="1"/>
</dbReference>
<dbReference type="PROSITE" id="PS51669">
    <property type="entry name" value="4FE4S_MOW_BIS_MGD"/>
    <property type="match status" value="1"/>
</dbReference>
<dbReference type="PROSITE" id="PS00641">
    <property type="entry name" value="COMPLEX1_75K_1"/>
    <property type="match status" value="1"/>
</dbReference>
<dbReference type="PROSITE" id="PS00642">
    <property type="entry name" value="COMPLEX1_75K_2"/>
    <property type="match status" value="1"/>
</dbReference>
<dbReference type="PROSITE" id="PS00643">
    <property type="entry name" value="COMPLEX1_75K_3"/>
    <property type="match status" value="1"/>
</dbReference>
<accession>P0A1Y4</accession>
<accession>P33900</accession>
<organism>
    <name type="scientific">Salmonella typhimurium (strain LT2 / SGSC1412 / ATCC 700720)</name>
    <dbReference type="NCBI Taxonomy" id="99287"/>
    <lineage>
        <taxon>Bacteria</taxon>
        <taxon>Pseudomonadati</taxon>
        <taxon>Pseudomonadota</taxon>
        <taxon>Gammaproteobacteria</taxon>
        <taxon>Enterobacterales</taxon>
        <taxon>Enterobacteriaceae</taxon>
        <taxon>Salmonella</taxon>
    </lineage>
</organism>